<sequence>MEFEEDFSARADKDFLKMGRKSKKEKKEKENPNVGIFGMFRYADWLDKLYMVLGTLAAVLHGTSLPLLMLVFGNMTDSFTKAETSIWPNMTNQSEINNTEVISGSLEEDMATYAYYYTGIGAGVLIVAYIQVSFWCLAAGRQINKIRQKFFHAIMNQEIGWFDVHDIGELNTRLTDDVSKINDGIGDKIGMFFQSIATFLAAFIVGFISGWKLTLVILAVSPLIGLSSAMWAKVLTSFTNKELQAYAKAGAVAEEVLAAIRTVIAFGGQNKELERYNKNLEEAKNVGIKKAVTANISIGIAYLLVYASYALAFWYGTSLVLSNEYSVGQVLTVFFSILFGTFSIGHIAPNIEVFANARGAAYEIFKIIDNEPSIDSFSTQGHKPDSVMGNLEFKNVHFSYPSRSGIKILKGLNLKVQSGQTVALVGKSGCGKSTTVQLLQRLYDPTEGVVSIDGQDIRTINVRYLREIIGVVSQEPVLFATTIAENIRYGRENVTMDEIEKAVKEANAYDFIMKLPHKFDTLVGERGAQLSGGQKQRIAIARALVRNPKILLLDEATSALDTESEAVVQAALDKAREGRTTIVIAHRLSTVRNADVIAGFDGGVIVEQGNHEELMKEKGIYCRLVMMQTRGNEVELGSEADGSQSDTIASELTSEEFKSPSVRKSTCRSICGSQDQERRVSVKEAQDEDVPLVSFWGILKLNITEWPYLVVGVLCAVINGCMQPVFSIVFSGIIGVFTRDDDPKTKQQNCNLFSLFFLVMGMICFVTYFFQGFTFGKAGEILTKRLRYMVFKSMLRQDISWFDDHRNSTGALTTRLASDAANVKGAMSSRLAGITQNVANLGTGIIISLVYGWQLTLLLVVIAPLIILSGMMEMKVLSGQALKDKKELEVSGKIATEAIENFRTVVSLTREQKFENMYAQSLQIPYRNALKKAHVFGITFSFTQAMMYFSYAACFRFGAYLVAHQIMTFENVMLVFSAVVFGAIAAGNASSFAPDYAKAKVSASHIIRIMEKIPSIDSYSTRGLKPNWLEGNVKFNEVVFNYPTRPDIPVLQGLSLEVKKGQTLALVGSSGCGKSTVVQLLERFYDPMAGTVFLDGKEIKQLNVQWLRAHLGIVSQEPILFDCSIAENIAYGDNSRVVSQDEIERAAKEANIHQFIESLPDKYNTRVGDKGTQLSGGQKQRIAIARALVRQPHILLLDEATSALDTESEKVVQEALDKAREGRTCIVIAHRLSTIQNADLIVVIQNGKVKEHGTHQQLLAQKGIYFSMVQAGAKRL</sequence>
<accession>P21449</accession>
<feature type="chain" id="PRO_0000093340" description="Multidrug resistance protein 2">
    <location>
        <begin position="1"/>
        <end position="1276"/>
    </location>
</feature>
<feature type="topological domain" description="Cytoplasmic" evidence="2">
    <location>
        <begin position="1"/>
        <end position="51"/>
    </location>
</feature>
<feature type="transmembrane region" description="Helical" evidence="4">
    <location>
        <begin position="52"/>
        <end position="72"/>
    </location>
</feature>
<feature type="transmembrane region" description="Helical" evidence="4">
    <location>
        <begin position="119"/>
        <end position="139"/>
    </location>
</feature>
<feature type="transmembrane region" description="Helical" evidence="4">
    <location>
        <begin position="188"/>
        <end position="208"/>
    </location>
</feature>
<feature type="transmembrane region" description="Helical" evidence="4">
    <location>
        <begin position="215"/>
        <end position="235"/>
    </location>
</feature>
<feature type="transmembrane region" description="Helical" evidence="4">
    <location>
        <begin position="296"/>
        <end position="316"/>
    </location>
</feature>
<feature type="transmembrane region" description="Helical" evidence="4">
    <location>
        <begin position="325"/>
        <end position="345"/>
    </location>
</feature>
<feature type="topological domain" description="Cytoplasmic" evidence="2">
    <location>
        <begin position="346"/>
        <end position="708"/>
    </location>
</feature>
<feature type="transmembrane region" description="Helical" evidence="4">
    <location>
        <begin position="709"/>
        <end position="729"/>
    </location>
</feature>
<feature type="transmembrane region" description="Helical" evidence="4">
    <location>
        <begin position="755"/>
        <end position="775"/>
    </location>
</feature>
<feature type="transmembrane region" description="Helical" evidence="4">
    <location>
        <begin position="831"/>
        <end position="851"/>
    </location>
</feature>
<feature type="transmembrane region" description="Helical" evidence="4">
    <location>
        <begin position="852"/>
        <end position="872"/>
    </location>
</feature>
<feature type="transmembrane region" description="Helical" evidence="4">
    <location>
        <begin position="935"/>
        <end position="955"/>
    </location>
</feature>
<feature type="transmembrane region" description="Helical" evidence="4">
    <location>
        <begin position="972"/>
        <end position="992"/>
    </location>
</feature>
<feature type="topological domain" description="Cytoplasmic" evidence="2">
    <location>
        <begin position="993"/>
        <end position="1276"/>
    </location>
</feature>
<feature type="domain" description="ABC transmembrane type-1 1" evidence="4">
    <location>
        <begin position="51"/>
        <end position="356"/>
    </location>
</feature>
<feature type="domain" description="ABC transporter 1" evidence="3">
    <location>
        <begin position="391"/>
        <end position="627"/>
    </location>
</feature>
<feature type="domain" description="ABC transmembrane type-1 2" evidence="4">
    <location>
        <begin position="709"/>
        <end position="998"/>
    </location>
</feature>
<feature type="domain" description="ABC transporter 2" evidence="3">
    <location>
        <begin position="1033"/>
        <end position="1271"/>
    </location>
</feature>
<feature type="region of interest" description="Disordered" evidence="5">
    <location>
        <begin position="635"/>
        <end position="657"/>
    </location>
</feature>
<feature type="compositionally biased region" description="Polar residues" evidence="5">
    <location>
        <begin position="641"/>
        <end position="652"/>
    </location>
</feature>
<feature type="binding site" evidence="3">
    <location>
        <begin position="426"/>
        <end position="433"/>
    </location>
    <ligand>
        <name>ATP</name>
        <dbReference type="ChEBI" id="CHEBI:30616"/>
        <label>1</label>
    </ligand>
</feature>
<feature type="binding site" evidence="3">
    <location>
        <begin position="1068"/>
        <end position="1075"/>
    </location>
    <ligand>
        <name>ATP</name>
        <dbReference type="ChEBI" id="CHEBI:30616"/>
        <label>2</label>
    </ligand>
</feature>
<feature type="modified residue" description="Phosphoserine" evidence="1">
    <location>
        <position position="22"/>
    </location>
</feature>
<feature type="glycosylation site" description="N-linked (GlcNAc...) asparagine" evidence="2">
    <location>
        <position position="74"/>
    </location>
</feature>
<feature type="glycosylation site" description="N-linked (GlcNAc...) asparagine" evidence="2">
    <location>
        <position position="89"/>
    </location>
</feature>
<feature type="glycosylation site" description="N-linked (GlcNAc...) asparagine" evidence="2">
    <location>
        <position position="92"/>
    </location>
</feature>
<feature type="glycosylation site" description="N-linked (GlcNAc...) asparagine" evidence="2">
    <location>
        <position position="97"/>
    </location>
</feature>
<feature type="glycosylation site" description="N-linked (GlcNAc...) asparagine" evidence="2">
    <location>
        <position position="295"/>
    </location>
</feature>
<feature type="glycosylation site" description="N-linked (GlcNAc...) asparagine" evidence="2">
    <location>
        <position position="807"/>
    </location>
</feature>
<gene>
    <name type="primary">PGY2</name>
    <name type="synonym">PGP2</name>
</gene>
<evidence type="ECO:0000250" key="1">
    <source>
        <dbReference type="UniProtKB" id="P21440"/>
    </source>
</evidence>
<evidence type="ECO:0000255" key="2"/>
<evidence type="ECO:0000255" key="3">
    <source>
        <dbReference type="PROSITE-ProRule" id="PRU00434"/>
    </source>
</evidence>
<evidence type="ECO:0000255" key="4">
    <source>
        <dbReference type="PROSITE-ProRule" id="PRU00441"/>
    </source>
</evidence>
<evidence type="ECO:0000256" key="5">
    <source>
        <dbReference type="SAM" id="MobiDB-lite"/>
    </source>
</evidence>
<evidence type="ECO:0000305" key="6"/>
<protein>
    <recommendedName>
        <fullName>Multidrug resistance protein 2</fullName>
        <ecNumber>7.6.2.2</ecNumber>
    </recommendedName>
    <alternativeName>
        <fullName>P-glycoprotein 2</fullName>
    </alternativeName>
</protein>
<proteinExistence type="evidence at transcript level"/>
<organism>
    <name type="scientific">Cricetulus griseus</name>
    <name type="common">Chinese hamster</name>
    <name type="synonym">Cricetulus barabensis griseus</name>
    <dbReference type="NCBI Taxonomy" id="10029"/>
    <lineage>
        <taxon>Eukaryota</taxon>
        <taxon>Metazoa</taxon>
        <taxon>Chordata</taxon>
        <taxon>Craniata</taxon>
        <taxon>Vertebrata</taxon>
        <taxon>Euteleostomi</taxon>
        <taxon>Mammalia</taxon>
        <taxon>Eutheria</taxon>
        <taxon>Euarchontoglires</taxon>
        <taxon>Glires</taxon>
        <taxon>Rodentia</taxon>
        <taxon>Myomorpha</taxon>
        <taxon>Muroidea</taxon>
        <taxon>Cricetidae</taxon>
        <taxon>Cricetinae</taxon>
        <taxon>Cricetulus</taxon>
    </lineage>
</organism>
<comment type="function">
    <text>Energy-dependent efflux pump responsible for decreased drug accumulation in multidrug-resistant cells.</text>
</comment>
<comment type="catalytic activity">
    <reaction>
        <text>ATP + H2O + xenobioticSide 1 = ADP + phosphate + xenobioticSide 2.</text>
        <dbReference type="EC" id="7.6.2.2"/>
    </reaction>
</comment>
<comment type="subcellular location">
    <subcellularLocation>
        <location>Membrane</location>
        <topology>Multi-pass membrane protein</topology>
    </subcellularLocation>
</comment>
<comment type="miscellaneous">
    <text>PGP isoforms differ in their drug transport capabilities: PGP1 and PGP2 can mediate MDR, while PGP3 apparently cannot.</text>
</comment>
<comment type="similarity">
    <text evidence="6">Belongs to the ABC transporter superfamily. ABCB family. Multidrug resistance exporter (TC 3.A.1.201) subfamily.</text>
</comment>
<dbReference type="EC" id="7.6.2.2"/>
<dbReference type="EMBL" id="M60041">
    <property type="protein sequence ID" value="AAA68884.1"/>
    <property type="molecule type" value="mRNA"/>
</dbReference>
<dbReference type="EMBL" id="M17896">
    <property type="protein sequence ID" value="AAA37007.1"/>
    <property type="molecule type" value="mRNA"/>
</dbReference>
<dbReference type="PIR" id="B27126">
    <property type="entry name" value="DVHY2C"/>
</dbReference>
<dbReference type="RefSeq" id="NP_001230918.1">
    <property type="nucleotide sequence ID" value="NM_001243989.1"/>
</dbReference>
<dbReference type="SMR" id="P21449"/>
<dbReference type="GlyCosmos" id="P21449">
    <property type="glycosylation" value="6 sites, No reported glycans"/>
</dbReference>
<dbReference type="PaxDb" id="10029-NP_001230918.1"/>
<dbReference type="GeneID" id="100682537"/>
<dbReference type="KEGG" id="cge:100682537"/>
<dbReference type="CTD" id="18669"/>
<dbReference type="eggNOG" id="KOG0055">
    <property type="taxonomic scope" value="Eukaryota"/>
</dbReference>
<dbReference type="OrthoDB" id="6500128at2759"/>
<dbReference type="Proteomes" id="UP000694386">
    <property type="component" value="Unplaced"/>
</dbReference>
<dbReference type="Proteomes" id="UP001108280">
    <property type="component" value="Chromosome 1"/>
</dbReference>
<dbReference type="GO" id="GO:0005743">
    <property type="term" value="C:mitochondrial inner membrane"/>
    <property type="evidence" value="ECO:0007669"/>
    <property type="project" value="TreeGrafter"/>
</dbReference>
<dbReference type="GO" id="GO:0015421">
    <property type="term" value="F:ABC-type oligopeptide transporter activity"/>
    <property type="evidence" value="ECO:0007669"/>
    <property type="project" value="TreeGrafter"/>
</dbReference>
<dbReference type="GO" id="GO:0008559">
    <property type="term" value="F:ABC-type xenobiotic transporter activity"/>
    <property type="evidence" value="ECO:0007669"/>
    <property type="project" value="UniProtKB-EC"/>
</dbReference>
<dbReference type="GO" id="GO:0005524">
    <property type="term" value="F:ATP binding"/>
    <property type="evidence" value="ECO:0007669"/>
    <property type="project" value="UniProtKB-KW"/>
</dbReference>
<dbReference type="GO" id="GO:0016887">
    <property type="term" value="F:ATP hydrolysis activity"/>
    <property type="evidence" value="ECO:0007669"/>
    <property type="project" value="InterPro"/>
</dbReference>
<dbReference type="GO" id="GO:0090374">
    <property type="term" value="P:oligopeptide export from mitochondrion"/>
    <property type="evidence" value="ECO:0007669"/>
    <property type="project" value="TreeGrafter"/>
</dbReference>
<dbReference type="CDD" id="cd18578">
    <property type="entry name" value="ABC_6TM_Pgp_ABCB1_D2_like"/>
    <property type="match status" value="1"/>
</dbReference>
<dbReference type="CDD" id="cd03249">
    <property type="entry name" value="ABC_MTABC3_MDL1_MDL2"/>
    <property type="match status" value="2"/>
</dbReference>
<dbReference type="FunFam" id="1.20.1560.10:FF:000018">
    <property type="entry name" value="ATP-binding cassette subfamily B member 11"/>
    <property type="match status" value="1"/>
</dbReference>
<dbReference type="FunFam" id="1.20.1560.10:FF:000043">
    <property type="entry name" value="Multidrug resistance protein 1A"/>
    <property type="match status" value="1"/>
</dbReference>
<dbReference type="FunFam" id="3.40.50.300:FF:000479">
    <property type="entry name" value="Multidrug resistance protein 1A"/>
    <property type="match status" value="2"/>
</dbReference>
<dbReference type="Gene3D" id="1.20.1560.10">
    <property type="entry name" value="ABC transporter type 1, transmembrane domain"/>
    <property type="match status" value="1"/>
</dbReference>
<dbReference type="Gene3D" id="3.40.50.300">
    <property type="entry name" value="P-loop containing nucleotide triphosphate hydrolases"/>
    <property type="match status" value="2"/>
</dbReference>
<dbReference type="InterPro" id="IPR003593">
    <property type="entry name" value="AAA+_ATPase"/>
</dbReference>
<dbReference type="InterPro" id="IPR011527">
    <property type="entry name" value="ABC1_TM_dom"/>
</dbReference>
<dbReference type="InterPro" id="IPR036640">
    <property type="entry name" value="ABC1_TM_sf"/>
</dbReference>
<dbReference type="InterPro" id="IPR003439">
    <property type="entry name" value="ABC_transporter-like_ATP-bd"/>
</dbReference>
<dbReference type="InterPro" id="IPR017871">
    <property type="entry name" value="ABC_transporter-like_CS"/>
</dbReference>
<dbReference type="InterPro" id="IPR027417">
    <property type="entry name" value="P-loop_NTPase"/>
</dbReference>
<dbReference type="InterPro" id="IPR039421">
    <property type="entry name" value="Type_1_exporter"/>
</dbReference>
<dbReference type="PANTHER" id="PTHR43394:SF28">
    <property type="entry name" value="ATP-BINDING CASSETTE SUBFAMILY B MEMBER 1"/>
    <property type="match status" value="1"/>
</dbReference>
<dbReference type="PANTHER" id="PTHR43394">
    <property type="entry name" value="ATP-DEPENDENT PERMEASE MDL1, MITOCHONDRIAL"/>
    <property type="match status" value="1"/>
</dbReference>
<dbReference type="Pfam" id="PF00664">
    <property type="entry name" value="ABC_membrane"/>
    <property type="match status" value="2"/>
</dbReference>
<dbReference type="Pfam" id="PF00005">
    <property type="entry name" value="ABC_tran"/>
    <property type="match status" value="2"/>
</dbReference>
<dbReference type="SMART" id="SM00382">
    <property type="entry name" value="AAA"/>
    <property type="match status" value="2"/>
</dbReference>
<dbReference type="SUPFAM" id="SSF90123">
    <property type="entry name" value="ABC transporter transmembrane region"/>
    <property type="match status" value="2"/>
</dbReference>
<dbReference type="SUPFAM" id="SSF52540">
    <property type="entry name" value="P-loop containing nucleoside triphosphate hydrolases"/>
    <property type="match status" value="2"/>
</dbReference>
<dbReference type="PROSITE" id="PS50929">
    <property type="entry name" value="ABC_TM1F"/>
    <property type="match status" value="2"/>
</dbReference>
<dbReference type="PROSITE" id="PS00211">
    <property type="entry name" value="ABC_TRANSPORTER_1"/>
    <property type="match status" value="2"/>
</dbReference>
<dbReference type="PROSITE" id="PS50893">
    <property type="entry name" value="ABC_TRANSPORTER_2"/>
    <property type="match status" value="2"/>
</dbReference>
<reference key="1">
    <citation type="journal article" date="1991" name="DNA Seq.">
        <title>Complete cDNA sequences encoding the Chinese hamster P-glycoprotein gene family.</title>
        <authorList>
            <person name="Endicott J.A."/>
            <person name="Sarangi F."/>
            <person name="Ling V."/>
        </authorList>
    </citation>
    <scope>NUCLEOTIDE SEQUENCE [MRNA]</scope>
</reference>
<reference key="2">
    <citation type="journal article" date="1987" name="Mol. Cell. Biol.">
        <title>Simultaneous expression of two P-glycoprotein genes in drug-sensitive Chinese hamster ovary cells.</title>
        <authorList>
            <person name="Endicott J.A."/>
            <person name="Juranka P.F."/>
            <person name="Sarangi F."/>
            <person name="Gerlach J.H."/>
            <person name="Deuchars K.L."/>
            <person name="Ling V."/>
        </authorList>
    </citation>
    <scope>NUCLEOTIDE SEQUENCE [MRNA] OF 622-1276</scope>
</reference>
<name>MDR2_CRIGR</name>
<keyword id="KW-0067">ATP-binding</keyword>
<keyword id="KW-0325">Glycoprotein</keyword>
<keyword id="KW-0472">Membrane</keyword>
<keyword id="KW-0547">Nucleotide-binding</keyword>
<keyword id="KW-0597">Phosphoprotein</keyword>
<keyword id="KW-0677">Repeat</keyword>
<keyword id="KW-1278">Translocase</keyword>
<keyword id="KW-0812">Transmembrane</keyword>
<keyword id="KW-1133">Transmembrane helix</keyword>
<keyword id="KW-0813">Transport</keyword>